<keyword id="KW-0119">Carbohydrate metabolism</keyword>
<keyword id="KW-0963">Cytoplasm</keyword>
<keyword id="KW-0378">Hydrolase</keyword>
<keyword id="KW-0460">Magnesium</keyword>
<keyword id="KW-0479">Metal-binding</keyword>
<evidence type="ECO:0000255" key="1">
    <source>
        <dbReference type="HAMAP-Rule" id="MF_01855"/>
    </source>
</evidence>
<evidence type="ECO:0000305" key="2"/>
<sequence>MKRLDQVLAADGVNAELELVIKDVMVACKDIAYKLGQGELAGILGATEDENVQGETQKMLDVISNDLLKDILVANPYVRGVGSEEEDYTIAGNADGKYLVTFDPLDGSSNIDVNLSVGTIFSVLEAQDDQSGDNQEVFLQNGRKQVAAGYVLYGPSSLLVMTTGNGVNLFTLDTNIGEFVLTKEALQIPEDTAEFAINMSNQRFWEPEMKQYIDDCLLGEEGPLAKRYNMRWVASMVAEVHRILIRGGIFMYPYDNRDPSKAGKLRLMYEGNPMSMIVEQAGGASSTGRMDIMDVAPQGIHDRVPVVLGSKNEVAKVVAYHTK</sequence>
<dbReference type="EC" id="3.1.3.11" evidence="1"/>
<dbReference type="EMBL" id="CP000109">
    <property type="protein sequence ID" value="ABB42087.1"/>
    <property type="status" value="ALT_INIT"/>
    <property type="molecule type" value="Genomic_DNA"/>
</dbReference>
<dbReference type="SMR" id="Q31FI6"/>
<dbReference type="STRING" id="317025.Tcr_1495"/>
<dbReference type="KEGG" id="tcx:Tcr_1495"/>
<dbReference type="eggNOG" id="COG0158">
    <property type="taxonomic scope" value="Bacteria"/>
</dbReference>
<dbReference type="HOGENOM" id="CLU_039977_0_0_6"/>
<dbReference type="OrthoDB" id="9806756at2"/>
<dbReference type="UniPathway" id="UPA00138"/>
<dbReference type="GO" id="GO:0005829">
    <property type="term" value="C:cytosol"/>
    <property type="evidence" value="ECO:0007669"/>
    <property type="project" value="TreeGrafter"/>
</dbReference>
<dbReference type="GO" id="GO:0042132">
    <property type="term" value="F:fructose 1,6-bisphosphate 1-phosphatase activity"/>
    <property type="evidence" value="ECO:0007669"/>
    <property type="project" value="UniProtKB-UniRule"/>
</dbReference>
<dbReference type="GO" id="GO:0000287">
    <property type="term" value="F:magnesium ion binding"/>
    <property type="evidence" value="ECO:0007669"/>
    <property type="project" value="UniProtKB-UniRule"/>
</dbReference>
<dbReference type="GO" id="GO:0030388">
    <property type="term" value="P:fructose 1,6-bisphosphate metabolic process"/>
    <property type="evidence" value="ECO:0007669"/>
    <property type="project" value="TreeGrafter"/>
</dbReference>
<dbReference type="GO" id="GO:0006002">
    <property type="term" value="P:fructose 6-phosphate metabolic process"/>
    <property type="evidence" value="ECO:0007669"/>
    <property type="project" value="TreeGrafter"/>
</dbReference>
<dbReference type="GO" id="GO:0006000">
    <property type="term" value="P:fructose metabolic process"/>
    <property type="evidence" value="ECO:0007669"/>
    <property type="project" value="TreeGrafter"/>
</dbReference>
<dbReference type="GO" id="GO:0006094">
    <property type="term" value="P:gluconeogenesis"/>
    <property type="evidence" value="ECO:0007669"/>
    <property type="project" value="UniProtKB-UniRule"/>
</dbReference>
<dbReference type="GO" id="GO:0005986">
    <property type="term" value="P:sucrose biosynthetic process"/>
    <property type="evidence" value="ECO:0007669"/>
    <property type="project" value="TreeGrafter"/>
</dbReference>
<dbReference type="CDD" id="cd00354">
    <property type="entry name" value="FBPase"/>
    <property type="match status" value="1"/>
</dbReference>
<dbReference type="FunFam" id="3.30.540.10:FF:000002">
    <property type="entry name" value="Fructose-1,6-bisphosphatase class 1"/>
    <property type="match status" value="1"/>
</dbReference>
<dbReference type="FunFam" id="3.40.190.80:FF:000011">
    <property type="entry name" value="Fructose-1,6-bisphosphatase class 1"/>
    <property type="match status" value="1"/>
</dbReference>
<dbReference type="Gene3D" id="3.40.190.80">
    <property type="match status" value="1"/>
</dbReference>
<dbReference type="Gene3D" id="3.30.540.10">
    <property type="entry name" value="Fructose-1,6-Bisphosphatase, subunit A, domain 1"/>
    <property type="match status" value="1"/>
</dbReference>
<dbReference type="HAMAP" id="MF_01855">
    <property type="entry name" value="FBPase_class1"/>
    <property type="match status" value="1"/>
</dbReference>
<dbReference type="InterPro" id="IPR044015">
    <property type="entry name" value="FBPase_C_dom"/>
</dbReference>
<dbReference type="InterPro" id="IPR000146">
    <property type="entry name" value="FBPase_class-1"/>
</dbReference>
<dbReference type="InterPro" id="IPR033391">
    <property type="entry name" value="FBPase_N"/>
</dbReference>
<dbReference type="InterPro" id="IPR028343">
    <property type="entry name" value="FBPtase"/>
</dbReference>
<dbReference type="NCBIfam" id="NF006779">
    <property type="entry name" value="PRK09293.1-3"/>
    <property type="match status" value="1"/>
</dbReference>
<dbReference type="NCBIfam" id="NF006780">
    <property type="entry name" value="PRK09293.1-4"/>
    <property type="match status" value="1"/>
</dbReference>
<dbReference type="PANTHER" id="PTHR11556">
    <property type="entry name" value="FRUCTOSE-1,6-BISPHOSPHATASE-RELATED"/>
    <property type="match status" value="1"/>
</dbReference>
<dbReference type="PANTHER" id="PTHR11556:SF35">
    <property type="entry name" value="SEDOHEPTULOSE-1,7-BISPHOSPHATASE, CHLOROPLASTIC"/>
    <property type="match status" value="1"/>
</dbReference>
<dbReference type="Pfam" id="PF00316">
    <property type="entry name" value="FBPase"/>
    <property type="match status" value="1"/>
</dbReference>
<dbReference type="Pfam" id="PF18913">
    <property type="entry name" value="FBPase_C"/>
    <property type="match status" value="1"/>
</dbReference>
<dbReference type="PIRSF" id="PIRSF500210">
    <property type="entry name" value="FBPtase"/>
    <property type="match status" value="1"/>
</dbReference>
<dbReference type="PIRSF" id="PIRSF000904">
    <property type="entry name" value="FBPtase_SBPase"/>
    <property type="match status" value="1"/>
</dbReference>
<dbReference type="PRINTS" id="PR00115">
    <property type="entry name" value="F16BPHPHTASE"/>
</dbReference>
<dbReference type="SUPFAM" id="SSF56655">
    <property type="entry name" value="Carbohydrate phosphatase"/>
    <property type="match status" value="1"/>
</dbReference>
<feature type="chain" id="PRO_0000364735" description="Fructose-1,6-bisphosphatase class 1">
    <location>
        <begin position="1"/>
        <end position="323"/>
    </location>
</feature>
<feature type="binding site" evidence="1">
    <location>
        <position position="84"/>
    </location>
    <ligand>
        <name>Mg(2+)</name>
        <dbReference type="ChEBI" id="CHEBI:18420"/>
        <label>1</label>
    </ligand>
</feature>
<feature type="binding site" evidence="1">
    <location>
        <position position="103"/>
    </location>
    <ligand>
        <name>Mg(2+)</name>
        <dbReference type="ChEBI" id="CHEBI:18420"/>
        <label>1</label>
    </ligand>
</feature>
<feature type="binding site" evidence="1">
    <location>
        <position position="103"/>
    </location>
    <ligand>
        <name>Mg(2+)</name>
        <dbReference type="ChEBI" id="CHEBI:18420"/>
        <label>2</label>
    </ligand>
</feature>
<feature type="binding site" evidence="1">
    <location>
        <position position="105"/>
    </location>
    <ligand>
        <name>Mg(2+)</name>
        <dbReference type="ChEBI" id="CHEBI:18420"/>
        <label>1</label>
    </ligand>
</feature>
<feature type="binding site" evidence="1">
    <location>
        <begin position="106"/>
        <end position="109"/>
    </location>
    <ligand>
        <name>substrate</name>
    </ligand>
</feature>
<feature type="binding site" evidence="1">
    <location>
        <position position="106"/>
    </location>
    <ligand>
        <name>Mg(2+)</name>
        <dbReference type="ChEBI" id="CHEBI:18420"/>
        <label>2</label>
    </ligand>
</feature>
<feature type="binding site" evidence="1">
    <location>
        <position position="198"/>
    </location>
    <ligand>
        <name>substrate</name>
    </ligand>
</feature>
<feature type="binding site" evidence="1">
    <location>
        <position position="264"/>
    </location>
    <ligand>
        <name>substrate</name>
    </ligand>
</feature>
<feature type="binding site" evidence="1">
    <location>
        <position position="270"/>
    </location>
    <ligand>
        <name>Mg(2+)</name>
        <dbReference type="ChEBI" id="CHEBI:18420"/>
        <label>2</label>
    </ligand>
</feature>
<name>F16PA_HYDCU</name>
<protein>
    <recommendedName>
        <fullName evidence="1">Fructose-1,6-bisphosphatase class 1</fullName>
        <shortName evidence="1">FBPase class 1</shortName>
        <ecNumber evidence="1">3.1.3.11</ecNumber>
    </recommendedName>
    <alternativeName>
        <fullName evidence="1">D-fructose-1,6-bisphosphate 1-phosphohydrolase class 1</fullName>
    </alternativeName>
</protein>
<gene>
    <name evidence="1" type="primary">fbp</name>
    <name type="ordered locus">Tcr_1495</name>
</gene>
<comment type="catalytic activity">
    <reaction evidence="1">
        <text>beta-D-fructose 1,6-bisphosphate + H2O = beta-D-fructose 6-phosphate + phosphate</text>
        <dbReference type="Rhea" id="RHEA:11064"/>
        <dbReference type="ChEBI" id="CHEBI:15377"/>
        <dbReference type="ChEBI" id="CHEBI:32966"/>
        <dbReference type="ChEBI" id="CHEBI:43474"/>
        <dbReference type="ChEBI" id="CHEBI:57634"/>
        <dbReference type="EC" id="3.1.3.11"/>
    </reaction>
</comment>
<comment type="cofactor">
    <cofactor evidence="1">
        <name>Mg(2+)</name>
        <dbReference type="ChEBI" id="CHEBI:18420"/>
    </cofactor>
    <text evidence="1">Binds 2 magnesium ions per subunit.</text>
</comment>
<comment type="pathway">
    <text evidence="1">Carbohydrate biosynthesis; gluconeogenesis.</text>
</comment>
<comment type="subunit">
    <text evidence="1">Homotetramer.</text>
</comment>
<comment type="subcellular location">
    <subcellularLocation>
        <location evidence="1">Cytoplasm</location>
    </subcellularLocation>
</comment>
<comment type="similarity">
    <text evidence="1">Belongs to the FBPase class 1 family.</text>
</comment>
<comment type="sequence caution" evidence="2">
    <conflict type="erroneous initiation">
        <sequence resource="EMBL-CDS" id="ABB42087"/>
    </conflict>
</comment>
<organism>
    <name type="scientific">Hydrogenovibrio crunogenus (strain DSM 25203 / XCL-2)</name>
    <name type="common">Thiomicrospira crunogena</name>
    <dbReference type="NCBI Taxonomy" id="317025"/>
    <lineage>
        <taxon>Bacteria</taxon>
        <taxon>Pseudomonadati</taxon>
        <taxon>Pseudomonadota</taxon>
        <taxon>Gammaproteobacteria</taxon>
        <taxon>Thiotrichales</taxon>
        <taxon>Piscirickettsiaceae</taxon>
        <taxon>Hydrogenovibrio</taxon>
    </lineage>
</organism>
<accession>Q31FI6</accession>
<proteinExistence type="inferred from homology"/>
<reference key="1">
    <citation type="journal article" date="2006" name="PLoS Biol.">
        <title>The genome of deep-sea vent chemolithoautotroph Thiomicrospira crunogena XCL-2.</title>
        <authorList>
            <person name="Scott K.M."/>
            <person name="Sievert S.M."/>
            <person name="Abril F.N."/>
            <person name="Ball L.A."/>
            <person name="Barrett C.J."/>
            <person name="Blake R.A."/>
            <person name="Boller A.J."/>
            <person name="Chain P.S.G."/>
            <person name="Clark J.A."/>
            <person name="Davis C.R."/>
            <person name="Detter C."/>
            <person name="Do K.F."/>
            <person name="Dobrinski K.P."/>
            <person name="Faza B.I."/>
            <person name="Fitzpatrick K.A."/>
            <person name="Freyermuth S.K."/>
            <person name="Harmer T.L."/>
            <person name="Hauser L.J."/>
            <person name="Huegler M."/>
            <person name="Kerfeld C.A."/>
            <person name="Klotz M.G."/>
            <person name="Kong W.W."/>
            <person name="Land M."/>
            <person name="Lapidus A."/>
            <person name="Larimer F.W."/>
            <person name="Longo D.L."/>
            <person name="Lucas S."/>
            <person name="Malfatti S.A."/>
            <person name="Massey S.E."/>
            <person name="Martin D.D."/>
            <person name="McCuddin Z."/>
            <person name="Meyer F."/>
            <person name="Moore J.L."/>
            <person name="Ocampo L.H. Jr."/>
            <person name="Paul J.H."/>
            <person name="Paulsen I.T."/>
            <person name="Reep D.K."/>
            <person name="Ren Q."/>
            <person name="Ross R.L."/>
            <person name="Sato P.Y."/>
            <person name="Thomas P."/>
            <person name="Tinkham L.E."/>
            <person name="Zeruth G.T."/>
        </authorList>
    </citation>
    <scope>NUCLEOTIDE SEQUENCE [LARGE SCALE GENOMIC DNA]</scope>
    <source>
        <strain>DSM 25203 / XCL-2</strain>
    </source>
</reference>